<accession>B5R2J0</accession>
<proteinExistence type="inferred from homology"/>
<dbReference type="EMBL" id="AM933172">
    <property type="protein sequence ID" value="CAR35874.1"/>
    <property type="molecule type" value="Genomic_DNA"/>
</dbReference>
<dbReference type="RefSeq" id="WP_000175965.1">
    <property type="nucleotide sequence ID" value="NC_011294.1"/>
</dbReference>
<dbReference type="SMR" id="B5R2J0"/>
<dbReference type="KEGG" id="set:SEN4322"/>
<dbReference type="HOGENOM" id="CLU_002794_2_1_6"/>
<dbReference type="Proteomes" id="UP000000613">
    <property type="component" value="Chromosome"/>
</dbReference>
<dbReference type="GO" id="GO:0005829">
    <property type="term" value="C:cytosol"/>
    <property type="evidence" value="ECO:0007669"/>
    <property type="project" value="TreeGrafter"/>
</dbReference>
<dbReference type="GO" id="GO:0005525">
    <property type="term" value="F:GTP binding"/>
    <property type="evidence" value="ECO:0007669"/>
    <property type="project" value="UniProtKB-UniRule"/>
</dbReference>
<dbReference type="GO" id="GO:0003924">
    <property type="term" value="F:GTPase activity"/>
    <property type="evidence" value="ECO:0007669"/>
    <property type="project" value="InterPro"/>
</dbReference>
<dbReference type="GO" id="GO:0097216">
    <property type="term" value="F:guanosine tetraphosphate binding"/>
    <property type="evidence" value="ECO:0007669"/>
    <property type="project" value="UniProtKB-ARBA"/>
</dbReference>
<dbReference type="GO" id="GO:0016150">
    <property type="term" value="F:translation release factor activity, codon nonspecific"/>
    <property type="evidence" value="ECO:0007669"/>
    <property type="project" value="TreeGrafter"/>
</dbReference>
<dbReference type="GO" id="GO:0016149">
    <property type="term" value="F:translation release factor activity, codon specific"/>
    <property type="evidence" value="ECO:0007669"/>
    <property type="project" value="UniProtKB-UniRule"/>
</dbReference>
<dbReference type="GO" id="GO:0006449">
    <property type="term" value="P:regulation of translational termination"/>
    <property type="evidence" value="ECO:0007669"/>
    <property type="project" value="UniProtKB-UniRule"/>
</dbReference>
<dbReference type="CDD" id="cd04169">
    <property type="entry name" value="RF3"/>
    <property type="match status" value="1"/>
</dbReference>
<dbReference type="CDD" id="cd03689">
    <property type="entry name" value="RF3_II"/>
    <property type="match status" value="1"/>
</dbReference>
<dbReference type="CDD" id="cd16259">
    <property type="entry name" value="RF3_III"/>
    <property type="match status" value="1"/>
</dbReference>
<dbReference type="FunFam" id="2.40.30.10:FF:000040">
    <property type="entry name" value="Peptide chain release factor 3"/>
    <property type="match status" value="1"/>
</dbReference>
<dbReference type="FunFam" id="3.30.70.3280:FF:000001">
    <property type="entry name" value="Peptide chain release factor 3"/>
    <property type="match status" value="1"/>
</dbReference>
<dbReference type="FunFam" id="3.40.50.300:FF:000184">
    <property type="entry name" value="Peptide chain release factor 3"/>
    <property type="match status" value="1"/>
</dbReference>
<dbReference type="FunFam" id="3.40.50.300:FF:000253">
    <property type="entry name" value="Peptide chain release factor 3"/>
    <property type="match status" value="1"/>
</dbReference>
<dbReference type="Gene3D" id="3.40.50.300">
    <property type="entry name" value="P-loop containing nucleotide triphosphate hydrolases"/>
    <property type="match status" value="3"/>
</dbReference>
<dbReference type="Gene3D" id="3.30.70.3280">
    <property type="entry name" value="Peptide chain release factor 3, domain III"/>
    <property type="match status" value="1"/>
</dbReference>
<dbReference type="HAMAP" id="MF_00072">
    <property type="entry name" value="Rel_fac_3"/>
    <property type="match status" value="1"/>
</dbReference>
<dbReference type="InterPro" id="IPR053905">
    <property type="entry name" value="EF-G-like_DII"/>
</dbReference>
<dbReference type="InterPro" id="IPR035647">
    <property type="entry name" value="EFG_III/V"/>
</dbReference>
<dbReference type="InterPro" id="IPR031157">
    <property type="entry name" value="G_TR_CS"/>
</dbReference>
<dbReference type="InterPro" id="IPR027417">
    <property type="entry name" value="P-loop_NTPase"/>
</dbReference>
<dbReference type="InterPro" id="IPR004548">
    <property type="entry name" value="PrfC"/>
</dbReference>
<dbReference type="InterPro" id="IPR032090">
    <property type="entry name" value="RF3_C"/>
</dbReference>
<dbReference type="InterPro" id="IPR038467">
    <property type="entry name" value="RF3_dom_3_sf"/>
</dbReference>
<dbReference type="InterPro" id="IPR041732">
    <property type="entry name" value="RF3_GTP-bd"/>
</dbReference>
<dbReference type="InterPro" id="IPR005225">
    <property type="entry name" value="Small_GTP-bd"/>
</dbReference>
<dbReference type="InterPro" id="IPR000795">
    <property type="entry name" value="T_Tr_GTP-bd_dom"/>
</dbReference>
<dbReference type="InterPro" id="IPR009000">
    <property type="entry name" value="Transl_B-barrel_sf"/>
</dbReference>
<dbReference type="NCBIfam" id="TIGR00503">
    <property type="entry name" value="prfC"/>
    <property type="match status" value="1"/>
</dbReference>
<dbReference type="NCBIfam" id="NF001964">
    <property type="entry name" value="PRK00741.1"/>
    <property type="match status" value="1"/>
</dbReference>
<dbReference type="NCBIfam" id="TIGR00231">
    <property type="entry name" value="small_GTP"/>
    <property type="match status" value="1"/>
</dbReference>
<dbReference type="PANTHER" id="PTHR43556">
    <property type="entry name" value="PEPTIDE CHAIN RELEASE FACTOR RF3"/>
    <property type="match status" value="1"/>
</dbReference>
<dbReference type="PANTHER" id="PTHR43556:SF2">
    <property type="entry name" value="PEPTIDE CHAIN RELEASE FACTOR RF3"/>
    <property type="match status" value="1"/>
</dbReference>
<dbReference type="Pfam" id="PF22042">
    <property type="entry name" value="EF-G_D2"/>
    <property type="match status" value="1"/>
</dbReference>
<dbReference type="Pfam" id="PF00009">
    <property type="entry name" value="GTP_EFTU"/>
    <property type="match status" value="1"/>
</dbReference>
<dbReference type="Pfam" id="PF16658">
    <property type="entry name" value="RF3_C"/>
    <property type="match status" value="1"/>
</dbReference>
<dbReference type="PRINTS" id="PR00315">
    <property type="entry name" value="ELONGATNFCT"/>
</dbReference>
<dbReference type="SUPFAM" id="SSF54980">
    <property type="entry name" value="EF-G C-terminal domain-like"/>
    <property type="match status" value="1"/>
</dbReference>
<dbReference type="SUPFAM" id="SSF52540">
    <property type="entry name" value="P-loop containing nucleoside triphosphate hydrolases"/>
    <property type="match status" value="1"/>
</dbReference>
<dbReference type="SUPFAM" id="SSF50447">
    <property type="entry name" value="Translation proteins"/>
    <property type="match status" value="1"/>
</dbReference>
<dbReference type="PROSITE" id="PS00301">
    <property type="entry name" value="G_TR_1"/>
    <property type="match status" value="1"/>
</dbReference>
<dbReference type="PROSITE" id="PS51722">
    <property type="entry name" value="G_TR_2"/>
    <property type="match status" value="1"/>
</dbReference>
<sequence>MTLSPYLQEVAKRRTFAIISHPDAGKTTITEKVLLFGQAIQTAGTVKGRGSSQHAKSDWMEMEKQRGISITTSVMQFPYHDCLVNLLDTPGHEDFSEDTYRTLTAVDCCLMVIDAAKGVEDRTRKLMEVTRLRDTPILTFMNKLDRDIRDPMELLDEVENELKIGCAPITWPIGCGKLFKGVYHLYKDETYLYQTGKGHTIQEVRIVKGLNNPDLDAAVGEDLAQQLRDELELVQGASNEFDEELFLAGEITPVFFGTALGNFGVDHMLDGLVAWAPAPMPRQTDTRTVEASEEKFTGFVFKIQANMDPKHRDRVAFMRVVSGKYEKGMKLRQVRTGKDVVISDALTFMAGDRSHVEEAYPGDILGLHNHGTIQIGDTFTQGEMMKFTGIPNFAPELFRRIRLKDPLKQKQLLKGLVQLSEEGAVQVFRPISNNDLIVGAVGVLQFDVVVARLKSEYNVEAIYESVNVATARWVESADAKKFEEFKRKNETQLALDGGDNLTYIAPTMVNLNLTQERYPDVQFRKTREH</sequence>
<feature type="chain" id="PRO_1000092495" description="Peptide chain release factor 3">
    <location>
        <begin position="1"/>
        <end position="529"/>
    </location>
</feature>
<feature type="domain" description="tr-type G">
    <location>
        <begin position="11"/>
        <end position="280"/>
    </location>
</feature>
<feature type="binding site" evidence="1">
    <location>
        <begin position="20"/>
        <end position="27"/>
    </location>
    <ligand>
        <name>GTP</name>
        <dbReference type="ChEBI" id="CHEBI:37565"/>
    </ligand>
</feature>
<feature type="binding site" evidence="1">
    <location>
        <begin position="88"/>
        <end position="92"/>
    </location>
    <ligand>
        <name>GTP</name>
        <dbReference type="ChEBI" id="CHEBI:37565"/>
    </ligand>
</feature>
<feature type="binding site" evidence="1">
    <location>
        <begin position="142"/>
        <end position="145"/>
    </location>
    <ligand>
        <name>GTP</name>
        <dbReference type="ChEBI" id="CHEBI:37565"/>
    </ligand>
</feature>
<evidence type="ECO:0000255" key="1">
    <source>
        <dbReference type="HAMAP-Rule" id="MF_00072"/>
    </source>
</evidence>
<name>RF3_SALEP</name>
<protein>
    <recommendedName>
        <fullName evidence="1">Peptide chain release factor 3</fullName>
        <shortName evidence="1">RF-3</shortName>
    </recommendedName>
</protein>
<organism>
    <name type="scientific">Salmonella enteritidis PT4 (strain P125109)</name>
    <dbReference type="NCBI Taxonomy" id="550537"/>
    <lineage>
        <taxon>Bacteria</taxon>
        <taxon>Pseudomonadati</taxon>
        <taxon>Pseudomonadota</taxon>
        <taxon>Gammaproteobacteria</taxon>
        <taxon>Enterobacterales</taxon>
        <taxon>Enterobacteriaceae</taxon>
        <taxon>Salmonella</taxon>
    </lineage>
</organism>
<gene>
    <name evidence="1" type="primary">prfC</name>
    <name type="ordered locus">SEN4322</name>
</gene>
<comment type="function">
    <text evidence="1">Increases the formation of ribosomal termination complexes and stimulates activities of RF-1 and RF-2. It binds guanine nucleotides and has strong preference for UGA stop codons. It may interact directly with the ribosome. The stimulation of RF-1 and RF-2 is significantly reduced by GTP and GDP, but not by GMP.</text>
</comment>
<comment type="subcellular location">
    <subcellularLocation>
        <location evidence="1">Cytoplasm</location>
    </subcellularLocation>
</comment>
<comment type="similarity">
    <text evidence="1">Belongs to the TRAFAC class translation factor GTPase superfamily. Classic translation factor GTPase family. PrfC subfamily.</text>
</comment>
<reference key="1">
    <citation type="journal article" date="2008" name="Genome Res.">
        <title>Comparative genome analysis of Salmonella enteritidis PT4 and Salmonella gallinarum 287/91 provides insights into evolutionary and host adaptation pathways.</title>
        <authorList>
            <person name="Thomson N.R."/>
            <person name="Clayton D.J."/>
            <person name="Windhorst D."/>
            <person name="Vernikos G."/>
            <person name="Davidson S."/>
            <person name="Churcher C."/>
            <person name="Quail M.A."/>
            <person name="Stevens M."/>
            <person name="Jones M.A."/>
            <person name="Watson M."/>
            <person name="Barron A."/>
            <person name="Layton A."/>
            <person name="Pickard D."/>
            <person name="Kingsley R.A."/>
            <person name="Bignell A."/>
            <person name="Clark L."/>
            <person name="Harris B."/>
            <person name="Ormond D."/>
            <person name="Abdellah Z."/>
            <person name="Brooks K."/>
            <person name="Cherevach I."/>
            <person name="Chillingworth T."/>
            <person name="Woodward J."/>
            <person name="Norberczak H."/>
            <person name="Lord A."/>
            <person name="Arrowsmith C."/>
            <person name="Jagels K."/>
            <person name="Moule S."/>
            <person name="Mungall K."/>
            <person name="Saunders M."/>
            <person name="Whitehead S."/>
            <person name="Chabalgoity J.A."/>
            <person name="Maskell D."/>
            <person name="Humphreys T."/>
            <person name="Roberts M."/>
            <person name="Barrow P.A."/>
            <person name="Dougan G."/>
            <person name="Parkhill J."/>
        </authorList>
    </citation>
    <scope>NUCLEOTIDE SEQUENCE [LARGE SCALE GENOMIC DNA]</scope>
    <source>
        <strain>P125109</strain>
    </source>
</reference>
<keyword id="KW-0963">Cytoplasm</keyword>
<keyword id="KW-0342">GTP-binding</keyword>
<keyword id="KW-0547">Nucleotide-binding</keyword>
<keyword id="KW-0648">Protein biosynthesis</keyword>